<name>SCX2_CENBO</name>
<organism>
    <name type="scientific">Centruroides bonito</name>
    <name type="common">Scorpion</name>
    <dbReference type="NCBI Taxonomy" id="3035065"/>
    <lineage>
        <taxon>Eukaryota</taxon>
        <taxon>Metazoa</taxon>
        <taxon>Ecdysozoa</taxon>
        <taxon>Arthropoda</taxon>
        <taxon>Chelicerata</taxon>
        <taxon>Arachnida</taxon>
        <taxon>Scorpiones</taxon>
        <taxon>Buthida</taxon>
        <taxon>Buthoidea</taxon>
        <taxon>Buthidae</taxon>
        <taxon>Centruroides</taxon>
    </lineage>
</organism>
<proteinExistence type="evidence at protein level"/>
<keyword id="KW-0027">Amidation</keyword>
<keyword id="KW-0903">Direct protein sequencing</keyword>
<keyword id="KW-1015">Disulfide bond</keyword>
<keyword id="KW-0872">Ion channel impairing toxin</keyword>
<keyword id="KW-0528">Neurotoxin</keyword>
<keyword id="KW-0964">Secreted</keyword>
<keyword id="KW-0800">Toxin</keyword>
<keyword id="KW-0738">Voltage-gated sodium channel impairing toxin</keyword>
<comment type="function">
    <text evidence="3">Beta toxins bind voltage-independently at site-4 of sodium channels and shift the voltage of activation toward more negative potentials thereby affecting sodium channel activation and promoting spontaneous and repetitive firing (PubMed:38535792). A mixture of Cbo2 and Cbo3 is weakly active on the human voltage-gated sodium channels Nav1.4/SCN4A and Nav1.6/SCN8A when tested at 200 nM (PubMed:38535792). In vivo, is toxic to mice when intraperitoneally injected (PubMed:38535792).</text>
</comment>
<comment type="subcellular location">
    <subcellularLocation>
        <location evidence="3">Secreted</location>
    </subcellularLocation>
</comment>
<comment type="tissue specificity">
    <text evidence="6">Expressed by the venom gland.</text>
</comment>
<comment type="domain">
    <text evidence="5">Has the structural arrangement of an alpha-helix connected to antiparallel beta-sheets by disulfide bonds (CS-alpha/beta).</text>
</comment>
<comment type="mass spectrometry"/>
<comment type="miscellaneous">
    <text evidence="3">Negative results: a mixture of Cbo2 and Cbo3 does not modify the currents of the human voltage-gated sodium channels Nav1.1/SCN1A, Nav1.2/SCN2A, Nav1.3/SCN3A, Nav1.5/SCN5A and Nav1.7/SCN9A.</text>
</comment>
<comment type="similarity">
    <text evidence="5">Belongs to the long (4 C-C) scorpion toxin superfamily. Sodium channel inhibitor family. Beta subfamily.</text>
</comment>
<dbReference type="SMR" id="C0HMA4"/>
<dbReference type="GO" id="GO:0005576">
    <property type="term" value="C:extracellular region"/>
    <property type="evidence" value="ECO:0007669"/>
    <property type="project" value="UniProtKB-SubCell"/>
</dbReference>
<dbReference type="GO" id="GO:0019871">
    <property type="term" value="F:sodium channel inhibitor activity"/>
    <property type="evidence" value="ECO:0007669"/>
    <property type="project" value="InterPro"/>
</dbReference>
<dbReference type="GO" id="GO:0090729">
    <property type="term" value="F:toxin activity"/>
    <property type="evidence" value="ECO:0007669"/>
    <property type="project" value="UniProtKB-KW"/>
</dbReference>
<dbReference type="GO" id="GO:0006952">
    <property type="term" value="P:defense response"/>
    <property type="evidence" value="ECO:0007669"/>
    <property type="project" value="InterPro"/>
</dbReference>
<dbReference type="CDD" id="cd23106">
    <property type="entry name" value="neurotoxins_LC_scorpion"/>
    <property type="match status" value="1"/>
</dbReference>
<dbReference type="FunFam" id="3.30.30.10:FF:000002">
    <property type="entry name" value="Alpha-like toxin BmK-M1"/>
    <property type="match status" value="1"/>
</dbReference>
<dbReference type="Gene3D" id="3.30.30.10">
    <property type="entry name" value="Knottin, scorpion toxin-like"/>
    <property type="match status" value="1"/>
</dbReference>
<dbReference type="InterPro" id="IPR044062">
    <property type="entry name" value="LCN-type_CS_alpha_beta_dom"/>
</dbReference>
<dbReference type="InterPro" id="IPR003614">
    <property type="entry name" value="Scorpion_toxin-like"/>
</dbReference>
<dbReference type="InterPro" id="IPR036574">
    <property type="entry name" value="Scorpion_toxin-like_sf"/>
</dbReference>
<dbReference type="InterPro" id="IPR018218">
    <property type="entry name" value="Scorpion_toxinL"/>
</dbReference>
<dbReference type="PRINTS" id="PR00285">
    <property type="entry name" value="SCORPNTOXIN"/>
</dbReference>
<dbReference type="SMART" id="SM00505">
    <property type="entry name" value="Knot1"/>
    <property type="match status" value="1"/>
</dbReference>
<dbReference type="SUPFAM" id="SSF57095">
    <property type="entry name" value="Scorpion toxin-like"/>
    <property type="match status" value="1"/>
</dbReference>
<dbReference type="PROSITE" id="PS51863">
    <property type="entry name" value="LCN_CSAB"/>
    <property type="match status" value="1"/>
</dbReference>
<reference evidence="5" key="1">
    <citation type="journal article" date="2024" name="Toxins">
        <title>Characterization of Sodium Channel Peptides Obtained from the Venom of the Scorpion Centruroides bonito.</title>
        <authorList>
            <person name="Restano-Cassulini R."/>
            <person name="Olamendi-Portugal T."/>
            <person name="Riano-Umbarila L."/>
            <person name="Zamudio F.Z."/>
            <person name="Delgado-Prudencio G."/>
            <person name="Becerril B."/>
            <person name="Possani L.D."/>
        </authorList>
    </citation>
    <scope>PROTEIN SEQUENCE</scope>
    <scope>FUNCTION</scope>
    <scope>SUBCELLULAR LOCATION</scope>
    <scope>TISSUE SPECIFICITY</scope>
    <scope>MASS SPECTROMETRY</scope>
    <source>
        <tissue evidence="4">Venom</tissue>
    </source>
</reference>
<protein>
    <recommendedName>
        <fullName evidence="5">Beta-toxin Cbo2</fullName>
        <shortName evidence="4">Cbo2</shortName>
    </recommendedName>
</protein>
<accession>C0HMA4</accession>
<feature type="chain" id="PRO_0000461090" description="Beta-toxin Cbo2">
    <location>
        <begin position="1"/>
        <end position="66"/>
    </location>
</feature>
<feature type="domain" description="LCN-type CS-alpha/beta" evidence="2">
    <location>
        <begin position="1"/>
        <end position="66"/>
    </location>
</feature>
<feature type="modified residue" description="Asparagine amide" evidence="1">
    <location>
        <position position="66"/>
    </location>
</feature>
<feature type="disulfide bond" evidence="2">
    <location>
        <begin position="12"/>
        <end position="65"/>
    </location>
</feature>
<feature type="disulfide bond" evidence="2">
    <location>
        <begin position="16"/>
        <end position="41"/>
    </location>
</feature>
<feature type="disulfide bond" evidence="2">
    <location>
        <begin position="25"/>
        <end position="46"/>
    </location>
</feature>
<feature type="disulfide bond" evidence="2">
    <location>
        <begin position="29"/>
        <end position="48"/>
    </location>
</feature>
<sequence>KEGYIVNYHDGCKYECYKLGDNDYCLRECRARYGKGAGGYCYAFGCWCTHLYEQAVVWPLPKKTCN</sequence>
<evidence type="ECO:0000250" key="1">
    <source>
        <dbReference type="UniProtKB" id="Q7Z1K8"/>
    </source>
</evidence>
<evidence type="ECO:0000255" key="2">
    <source>
        <dbReference type="PROSITE-ProRule" id="PRU01210"/>
    </source>
</evidence>
<evidence type="ECO:0000269" key="3">
    <source>
    </source>
</evidence>
<evidence type="ECO:0000303" key="4">
    <source>
    </source>
</evidence>
<evidence type="ECO:0000305" key="5"/>
<evidence type="ECO:0000305" key="6">
    <source>
    </source>
</evidence>